<organism>
    <name type="scientific">Roseobacter denitrificans (strain ATCC 33942 / OCh 114)</name>
    <name type="common">Erythrobacter sp. (strain OCh 114)</name>
    <name type="synonym">Roseobacter denitrificans</name>
    <dbReference type="NCBI Taxonomy" id="375451"/>
    <lineage>
        <taxon>Bacteria</taxon>
        <taxon>Pseudomonadati</taxon>
        <taxon>Pseudomonadota</taxon>
        <taxon>Alphaproteobacteria</taxon>
        <taxon>Rhodobacterales</taxon>
        <taxon>Roseobacteraceae</taxon>
        <taxon>Roseobacter</taxon>
    </lineage>
</organism>
<dbReference type="EC" id="6.1.1.4" evidence="1"/>
<dbReference type="EMBL" id="CP000362">
    <property type="protein sequence ID" value="ABG29787.1"/>
    <property type="molecule type" value="Genomic_DNA"/>
</dbReference>
<dbReference type="RefSeq" id="WP_011566409.1">
    <property type="nucleotide sequence ID" value="NC_008209.1"/>
</dbReference>
<dbReference type="SMR" id="Q16E06"/>
<dbReference type="STRING" id="375451.RD1_0049"/>
<dbReference type="KEGG" id="rde:RD1_0049"/>
<dbReference type="eggNOG" id="COG0495">
    <property type="taxonomic scope" value="Bacteria"/>
</dbReference>
<dbReference type="HOGENOM" id="CLU_004427_0_0_5"/>
<dbReference type="OrthoDB" id="9810365at2"/>
<dbReference type="Proteomes" id="UP000007029">
    <property type="component" value="Chromosome"/>
</dbReference>
<dbReference type="GO" id="GO:0005829">
    <property type="term" value="C:cytosol"/>
    <property type="evidence" value="ECO:0007669"/>
    <property type="project" value="TreeGrafter"/>
</dbReference>
<dbReference type="GO" id="GO:0002161">
    <property type="term" value="F:aminoacyl-tRNA deacylase activity"/>
    <property type="evidence" value="ECO:0007669"/>
    <property type="project" value="InterPro"/>
</dbReference>
<dbReference type="GO" id="GO:0005524">
    <property type="term" value="F:ATP binding"/>
    <property type="evidence" value="ECO:0007669"/>
    <property type="project" value="UniProtKB-UniRule"/>
</dbReference>
<dbReference type="GO" id="GO:0004823">
    <property type="term" value="F:leucine-tRNA ligase activity"/>
    <property type="evidence" value="ECO:0007669"/>
    <property type="project" value="UniProtKB-UniRule"/>
</dbReference>
<dbReference type="GO" id="GO:0006429">
    <property type="term" value="P:leucyl-tRNA aminoacylation"/>
    <property type="evidence" value="ECO:0007669"/>
    <property type="project" value="UniProtKB-UniRule"/>
</dbReference>
<dbReference type="CDD" id="cd07958">
    <property type="entry name" value="Anticodon_Ia_Leu_BEm"/>
    <property type="match status" value="1"/>
</dbReference>
<dbReference type="CDD" id="cd00812">
    <property type="entry name" value="LeuRS_core"/>
    <property type="match status" value="1"/>
</dbReference>
<dbReference type="FunFam" id="1.10.730.10:FF:000002">
    <property type="entry name" value="Leucine--tRNA ligase"/>
    <property type="match status" value="1"/>
</dbReference>
<dbReference type="FunFam" id="3.10.20.590:FF:000001">
    <property type="entry name" value="Leucine--tRNA ligase"/>
    <property type="match status" value="1"/>
</dbReference>
<dbReference type="Gene3D" id="2.20.28.290">
    <property type="match status" value="1"/>
</dbReference>
<dbReference type="Gene3D" id="3.10.20.590">
    <property type="match status" value="1"/>
</dbReference>
<dbReference type="Gene3D" id="3.40.50.620">
    <property type="entry name" value="HUPs"/>
    <property type="match status" value="2"/>
</dbReference>
<dbReference type="Gene3D" id="1.10.730.10">
    <property type="entry name" value="Isoleucyl-tRNA Synthetase, Domain 1"/>
    <property type="match status" value="2"/>
</dbReference>
<dbReference type="Gene3D" id="3.90.740.10">
    <property type="entry name" value="Valyl/Leucyl/Isoleucyl-tRNA synthetase, editing domain"/>
    <property type="match status" value="1"/>
</dbReference>
<dbReference type="HAMAP" id="MF_00049_B">
    <property type="entry name" value="Leu_tRNA_synth_B"/>
    <property type="match status" value="1"/>
</dbReference>
<dbReference type="InterPro" id="IPR001412">
    <property type="entry name" value="aa-tRNA-synth_I_CS"/>
</dbReference>
<dbReference type="InterPro" id="IPR002300">
    <property type="entry name" value="aa-tRNA-synth_Ia"/>
</dbReference>
<dbReference type="InterPro" id="IPR002302">
    <property type="entry name" value="Leu-tRNA-ligase"/>
</dbReference>
<dbReference type="InterPro" id="IPR025709">
    <property type="entry name" value="Leu_tRNA-synth_edit"/>
</dbReference>
<dbReference type="InterPro" id="IPR013155">
    <property type="entry name" value="M/V/L/I-tRNA-synth_anticd-bd"/>
</dbReference>
<dbReference type="InterPro" id="IPR015413">
    <property type="entry name" value="Methionyl/Leucyl_tRNA_Synth"/>
</dbReference>
<dbReference type="InterPro" id="IPR014729">
    <property type="entry name" value="Rossmann-like_a/b/a_fold"/>
</dbReference>
<dbReference type="InterPro" id="IPR009080">
    <property type="entry name" value="tRNAsynth_Ia_anticodon-bd"/>
</dbReference>
<dbReference type="InterPro" id="IPR009008">
    <property type="entry name" value="Val/Leu/Ile-tRNA-synth_edit"/>
</dbReference>
<dbReference type="NCBIfam" id="TIGR00396">
    <property type="entry name" value="leuS_bact"/>
    <property type="match status" value="1"/>
</dbReference>
<dbReference type="PANTHER" id="PTHR43740:SF2">
    <property type="entry name" value="LEUCINE--TRNA LIGASE, MITOCHONDRIAL"/>
    <property type="match status" value="1"/>
</dbReference>
<dbReference type="PANTHER" id="PTHR43740">
    <property type="entry name" value="LEUCYL-TRNA SYNTHETASE"/>
    <property type="match status" value="1"/>
</dbReference>
<dbReference type="Pfam" id="PF08264">
    <property type="entry name" value="Anticodon_1"/>
    <property type="match status" value="1"/>
</dbReference>
<dbReference type="Pfam" id="PF00133">
    <property type="entry name" value="tRNA-synt_1"/>
    <property type="match status" value="2"/>
</dbReference>
<dbReference type="Pfam" id="PF13603">
    <property type="entry name" value="tRNA-synt_1_2"/>
    <property type="match status" value="1"/>
</dbReference>
<dbReference type="Pfam" id="PF09334">
    <property type="entry name" value="tRNA-synt_1g"/>
    <property type="match status" value="1"/>
</dbReference>
<dbReference type="PRINTS" id="PR00985">
    <property type="entry name" value="TRNASYNTHLEU"/>
</dbReference>
<dbReference type="SUPFAM" id="SSF47323">
    <property type="entry name" value="Anticodon-binding domain of a subclass of class I aminoacyl-tRNA synthetases"/>
    <property type="match status" value="1"/>
</dbReference>
<dbReference type="SUPFAM" id="SSF52374">
    <property type="entry name" value="Nucleotidylyl transferase"/>
    <property type="match status" value="1"/>
</dbReference>
<dbReference type="SUPFAM" id="SSF50677">
    <property type="entry name" value="ValRS/IleRS/LeuRS editing domain"/>
    <property type="match status" value="1"/>
</dbReference>
<dbReference type="PROSITE" id="PS00178">
    <property type="entry name" value="AA_TRNA_LIGASE_I"/>
    <property type="match status" value="1"/>
</dbReference>
<reference key="1">
    <citation type="journal article" date="2007" name="J. Bacteriol.">
        <title>The complete genome sequence of Roseobacter denitrificans reveals a mixotrophic rather than photosynthetic metabolism.</title>
        <authorList>
            <person name="Swingley W.D."/>
            <person name="Sadekar S."/>
            <person name="Mastrian S.D."/>
            <person name="Matthies H.J."/>
            <person name="Hao J."/>
            <person name="Ramos H."/>
            <person name="Acharya C.R."/>
            <person name="Conrad A.L."/>
            <person name="Taylor H.L."/>
            <person name="Dejesa L.C."/>
            <person name="Shah M.K."/>
            <person name="O'Huallachain M.E."/>
            <person name="Lince M.T."/>
            <person name="Blankenship R.E."/>
            <person name="Beatty J.T."/>
            <person name="Touchman J.W."/>
        </authorList>
    </citation>
    <scope>NUCLEOTIDE SEQUENCE [LARGE SCALE GENOMIC DNA]</scope>
    <source>
        <strain>ATCC 33942 / OCh 114</strain>
    </source>
</reference>
<gene>
    <name evidence="1" type="primary">leuS</name>
    <name type="ordered locus">RD1_0049</name>
</gene>
<proteinExistence type="inferred from homology"/>
<name>SYL_ROSDO</name>
<accession>Q16E06</accession>
<sequence>MTRYTPAEIEARWQKAWRENEVFKAIRSADKPKYYVLEMFPYPSGRIHMGHVRNYTMGDVIARYKLATGHNVLHPMGWDAFGMPAENAAMAIGGHPKDWTYGNIKDMRDQMKPLGLSIDWSREFATCDPEYYGQQQALFLDFLEAGLVYRKNAIVNWDPVDMTVLANEQVEQGRGWRSGALVERRELTQWFFKISDHSEELLSALDTLENWPAKVRLMQENWIGKSRGLQFAFSTIDGPDGHDRIEVYTTRPDTLLGASFVGISPDHPLAKLLERDNDNVAAFCAECRKGGTTEEAIETAEKLGFDTGLRVRHPFDTAAELPVYIANFILMDYGTGAIFGCPAHDQRDFEFATKYDLPIISTFLPSQDADEVLSEAFVPAKTEKVFYNRGFAGAEFQTGLEAIDAAIDFCESNGIGQGVTKYRLRDWGLSRQRYWGCPIPVVHCDDCGVVPEKKENLPIELPYDVSFDTPGNPLNRHPTWRDTPCPACGKPAQRETDTMDTFVDSSWYFARFTAPRAETPTVMEDAQYWMNVDQYIGGIEHAILHLLYSRFFARAMQMTGHLPQSAIEPFDALFTQGMVTHEIYQTRDANGRPVYHLPEDVTDGRLADGTEVEIIPSAKMSKSKKNVVDPLGIIASYGADTARWFVLSDSPPERDVEWTASGAEAAFKHLTRVWTLSERIGKMDKDAAGQGDEDLLRAMHVCIHDVTMGIESFGFNAAIAKLYAFTAKLQKSKAGYGAQRTAIMTLAQLMSPMTPHLAEDIWAHQGGDGLVTTAPWPRADEAMLVSDTVTLPVQINGKRRAEIVISADLSKEEVEKIALADPAVIRSLNGATPKKIIVVPGRIVNVVV</sequence>
<evidence type="ECO:0000255" key="1">
    <source>
        <dbReference type="HAMAP-Rule" id="MF_00049"/>
    </source>
</evidence>
<feature type="chain" id="PRO_1000009419" description="Leucine--tRNA ligase">
    <location>
        <begin position="1"/>
        <end position="848"/>
    </location>
</feature>
<feature type="short sequence motif" description="'HIGH' region">
    <location>
        <begin position="41"/>
        <end position="51"/>
    </location>
</feature>
<feature type="short sequence motif" description="'KMSKS' region">
    <location>
        <begin position="619"/>
        <end position="623"/>
    </location>
</feature>
<feature type="binding site" evidence="1">
    <location>
        <position position="622"/>
    </location>
    <ligand>
        <name>ATP</name>
        <dbReference type="ChEBI" id="CHEBI:30616"/>
    </ligand>
</feature>
<comment type="catalytic activity">
    <reaction evidence="1">
        <text>tRNA(Leu) + L-leucine + ATP = L-leucyl-tRNA(Leu) + AMP + diphosphate</text>
        <dbReference type="Rhea" id="RHEA:11688"/>
        <dbReference type="Rhea" id="RHEA-COMP:9613"/>
        <dbReference type="Rhea" id="RHEA-COMP:9622"/>
        <dbReference type="ChEBI" id="CHEBI:30616"/>
        <dbReference type="ChEBI" id="CHEBI:33019"/>
        <dbReference type="ChEBI" id="CHEBI:57427"/>
        <dbReference type="ChEBI" id="CHEBI:78442"/>
        <dbReference type="ChEBI" id="CHEBI:78494"/>
        <dbReference type="ChEBI" id="CHEBI:456215"/>
        <dbReference type="EC" id="6.1.1.4"/>
    </reaction>
</comment>
<comment type="subcellular location">
    <subcellularLocation>
        <location evidence="1">Cytoplasm</location>
    </subcellularLocation>
</comment>
<comment type="similarity">
    <text evidence="1">Belongs to the class-I aminoacyl-tRNA synthetase family.</text>
</comment>
<protein>
    <recommendedName>
        <fullName evidence="1">Leucine--tRNA ligase</fullName>
        <ecNumber evidence="1">6.1.1.4</ecNumber>
    </recommendedName>
    <alternativeName>
        <fullName evidence="1">Leucyl-tRNA synthetase</fullName>
        <shortName evidence="1">LeuRS</shortName>
    </alternativeName>
</protein>
<keyword id="KW-0030">Aminoacyl-tRNA synthetase</keyword>
<keyword id="KW-0067">ATP-binding</keyword>
<keyword id="KW-0963">Cytoplasm</keyword>
<keyword id="KW-0436">Ligase</keyword>
<keyword id="KW-0547">Nucleotide-binding</keyword>
<keyword id="KW-0648">Protein biosynthesis</keyword>
<keyword id="KW-1185">Reference proteome</keyword>